<organism>
    <name type="scientific">Synechocystis sp. (strain ATCC 27184 / PCC 6803 / Kazusa)</name>
    <dbReference type="NCBI Taxonomy" id="1111708"/>
    <lineage>
        <taxon>Bacteria</taxon>
        <taxon>Bacillati</taxon>
        <taxon>Cyanobacteriota</taxon>
        <taxon>Cyanophyceae</taxon>
        <taxon>Synechococcales</taxon>
        <taxon>Merismopediaceae</taxon>
        <taxon>Synechocystis</taxon>
    </lineage>
</organism>
<gene>
    <name type="primary">pheS</name>
    <name type="ordered locus">sll0454</name>
</gene>
<keyword id="KW-0030">Aminoacyl-tRNA synthetase</keyword>
<keyword id="KW-0067">ATP-binding</keyword>
<keyword id="KW-0963">Cytoplasm</keyword>
<keyword id="KW-0436">Ligase</keyword>
<keyword id="KW-0460">Magnesium</keyword>
<keyword id="KW-0479">Metal-binding</keyword>
<keyword id="KW-0547">Nucleotide-binding</keyword>
<keyword id="KW-0648">Protein biosynthesis</keyword>
<keyword id="KW-1185">Reference proteome</keyword>
<protein>
    <recommendedName>
        <fullName>Phenylalanine--tRNA ligase alpha subunit</fullName>
        <ecNumber>6.1.1.20</ecNumber>
    </recommendedName>
    <alternativeName>
        <fullName>Phenylalanyl-tRNA synthetase alpha subunit</fullName>
        <shortName>PheRS</shortName>
    </alternativeName>
</protein>
<name>SYFA_SYNY3</name>
<proteinExistence type="inferred from homology"/>
<accession>Q55187</accession>
<evidence type="ECO:0000250" key="1"/>
<evidence type="ECO:0000305" key="2"/>
<comment type="catalytic activity">
    <reaction>
        <text>tRNA(Phe) + L-phenylalanine + ATP = L-phenylalanyl-tRNA(Phe) + AMP + diphosphate + H(+)</text>
        <dbReference type="Rhea" id="RHEA:19413"/>
        <dbReference type="Rhea" id="RHEA-COMP:9668"/>
        <dbReference type="Rhea" id="RHEA-COMP:9699"/>
        <dbReference type="ChEBI" id="CHEBI:15378"/>
        <dbReference type="ChEBI" id="CHEBI:30616"/>
        <dbReference type="ChEBI" id="CHEBI:33019"/>
        <dbReference type="ChEBI" id="CHEBI:58095"/>
        <dbReference type="ChEBI" id="CHEBI:78442"/>
        <dbReference type="ChEBI" id="CHEBI:78531"/>
        <dbReference type="ChEBI" id="CHEBI:456215"/>
        <dbReference type="EC" id="6.1.1.20"/>
    </reaction>
</comment>
<comment type="cofactor">
    <cofactor evidence="1">
        <name>Mg(2+)</name>
        <dbReference type="ChEBI" id="CHEBI:18420"/>
    </cofactor>
    <text evidence="1">Binds 2 magnesium ions per tetramer.</text>
</comment>
<comment type="subunit">
    <text evidence="1">Tetramer of two alpha and two beta subunits.</text>
</comment>
<comment type="subcellular location">
    <subcellularLocation>
        <location evidence="1">Cytoplasm</location>
    </subcellularLocation>
</comment>
<comment type="similarity">
    <text evidence="2">Belongs to the class-II aminoacyl-tRNA synthetase family. Phe-tRNA synthetase alpha subunit type 1 subfamily.</text>
</comment>
<dbReference type="EC" id="6.1.1.20"/>
<dbReference type="EMBL" id="BA000022">
    <property type="protein sequence ID" value="BAA10328.1"/>
    <property type="molecule type" value="Genomic_DNA"/>
</dbReference>
<dbReference type="PIR" id="S74410">
    <property type="entry name" value="S74410"/>
</dbReference>
<dbReference type="SMR" id="Q55187"/>
<dbReference type="FunCoup" id="Q55187">
    <property type="interactions" value="470"/>
</dbReference>
<dbReference type="IntAct" id="Q55187">
    <property type="interactions" value="2"/>
</dbReference>
<dbReference type="STRING" id="1148.gene:10499828"/>
<dbReference type="PaxDb" id="1148-1001185"/>
<dbReference type="EnsemblBacteria" id="BAA10328">
    <property type="protein sequence ID" value="BAA10328"/>
    <property type="gene ID" value="BAA10328"/>
</dbReference>
<dbReference type="KEGG" id="syn:sll0454"/>
<dbReference type="eggNOG" id="COG0016">
    <property type="taxonomic scope" value="Bacteria"/>
</dbReference>
<dbReference type="InParanoid" id="Q55187"/>
<dbReference type="PhylomeDB" id="Q55187"/>
<dbReference type="Proteomes" id="UP000001425">
    <property type="component" value="Chromosome"/>
</dbReference>
<dbReference type="GO" id="GO:0005737">
    <property type="term" value="C:cytoplasm"/>
    <property type="evidence" value="ECO:0000318"/>
    <property type="project" value="GO_Central"/>
</dbReference>
<dbReference type="GO" id="GO:0005524">
    <property type="term" value="F:ATP binding"/>
    <property type="evidence" value="ECO:0007669"/>
    <property type="project" value="UniProtKB-UniRule"/>
</dbReference>
<dbReference type="GO" id="GO:0000287">
    <property type="term" value="F:magnesium ion binding"/>
    <property type="evidence" value="ECO:0007669"/>
    <property type="project" value="UniProtKB-UniRule"/>
</dbReference>
<dbReference type="GO" id="GO:0004826">
    <property type="term" value="F:phenylalanine-tRNA ligase activity"/>
    <property type="evidence" value="ECO:0000318"/>
    <property type="project" value="GO_Central"/>
</dbReference>
<dbReference type="GO" id="GO:0000049">
    <property type="term" value="F:tRNA binding"/>
    <property type="evidence" value="ECO:0007669"/>
    <property type="project" value="InterPro"/>
</dbReference>
<dbReference type="GO" id="GO:0006432">
    <property type="term" value="P:phenylalanyl-tRNA aminoacylation"/>
    <property type="evidence" value="ECO:0000318"/>
    <property type="project" value="GO_Central"/>
</dbReference>
<dbReference type="CDD" id="cd00496">
    <property type="entry name" value="PheRS_alpha_core"/>
    <property type="match status" value="1"/>
</dbReference>
<dbReference type="FunFam" id="3.30.930.10:FF:000003">
    <property type="entry name" value="Phenylalanine--tRNA ligase alpha subunit"/>
    <property type="match status" value="1"/>
</dbReference>
<dbReference type="Gene3D" id="3.30.930.10">
    <property type="entry name" value="Bira Bifunctional Protein, Domain 2"/>
    <property type="match status" value="1"/>
</dbReference>
<dbReference type="HAMAP" id="MF_00281">
    <property type="entry name" value="Phe_tRNA_synth_alpha1"/>
    <property type="match status" value="1"/>
</dbReference>
<dbReference type="InterPro" id="IPR006195">
    <property type="entry name" value="aa-tRNA-synth_II"/>
</dbReference>
<dbReference type="InterPro" id="IPR045864">
    <property type="entry name" value="aa-tRNA-synth_II/BPL/LPL"/>
</dbReference>
<dbReference type="InterPro" id="IPR004529">
    <property type="entry name" value="Phe-tRNA-synth_IIc_asu"/>
</dbReference>
<dbReference type="InterPro" id="IPR004188">
    <property type="entry name" value="Phe-tRNA_ligase_II_N"/>
</dbReference>
<dbReference type="InterPro" id="IPR022911">
    <property type="entry name" value="Phe_tRNA_ligase_alpha1_bac"/>
</dbReference>
<dbReference type="InterPro" id="IPR002319">
    <property type="entry name" value="Phenylalanyl-tRNA_Synthase"/>
</dbReference>
<dbReference type="InterPro" id="IPR010978">
    <property type="entry name" value="tRNA-bd_arm"/>
</dbReference>
<dbReference type="NCBIfam" id="TIGR00468">
    <property type="entry name" value="pheS"/>
    <property type="match status" value="1"/>
</dbReference>
<dbReference type="PANTHER" id="PTHR11538:SF41">
    <property type="entry name" value="PHENYLALANINE--TRNA LIGASE, MITOCHONDRIAL"/>
    <property type="match status" value="1"/>
</dbReference>
<dbReference type="PANTHER" id="PTHR11538">
    <property type="entry name" value="PHENYLALANYL-TRNA SYNTHETASE"/>
    <property type="match status" value="1"/>
</dbReference>
<dbReference type="Pfam" id="PF02912">
    <property type="entry name" value="Phe_tRNA-synt_N"/>
    <property type="match status" value="1"/>
</dbReference>
<dbReference type="Pfam" id="PF01409">
    <property type="entry name" value="tRNA-synt_2d"/>
    <property type="match status" value="1"/>
</dbReference>
<dbReference type="SUPFAM" id="SSF55681">
    <property type="entry name" value="Class II aaRS and biotin synthetases"/>
    <property type="match status" value="1"/>
</dbReference>
<dbReference type="SUPFAM" id="SSF46589">
    <property type="entry name" value="tRNA-binding arm"/>
    <property type="match status" value="1"/>
</dbReference>
<dbReference type="PROSITE" id="PS50862">
    <property type="entry name" value="AA_TRNA_LIGASE_II"/>
    <property type="match status" value="1"/>
</dbReference>
<reference key="1">
    <citation type="journal article" date="1995" name="DNA Res.">
        <title>Sequence analysis of the genome of the unicellular cyanobacterium Synechocystis sp. strain PCC6803. I. Sequence features in the 1 Mb region from map positions 64% to 92% of the genome.</title>
        <authorList>
            <person name="Kaneko T."/>
            <person name="Tanaka A."/>
            <person name="Sato S."/>
            <person name="Kotani H."/>
            <person name="Sazuka T."/>
            <person name="Miyajima N."/>
            <person name="Sugiura M."/>
            <person name="Tabata S."/>
        </authorList>
    </citation>
    <scope>NUCLEOTIDE SEQUENCE [LARGE SCALE GENOMIC DNA]</scope>
    <source>
        <strain>ATCC 27184 / PCC 6803 / N-1</strain>
    </source>
</reference>
<reference key="2">
    <citation type="journal article" date="1996" name="DNA Res.">
        <title>Sequence analysis of the genome of the unicellular cyanobacterium Synechocystis sp. strain PCC6803. II. Sequence determination of the entire genome and assignment of potential protein-coding regions.</title>
        <authorList>
            <person name="Kaneko T."/>
            <person name="Sato S."/>
            <person name="Kotani H."/>
            <person name="Tanaka A."/>
            <person name="Asamizu E."/>
            <person name="Nakamura Y."/>
            <person name="Miyajima N."/>
            <person name="Hirosawa M."/>
            <person name="Sugiura M."/>
            <person name="Sasamoto S."/>
            <person name="Kimura T."/>
            <person name="Hosouchi T."/>
            <person name="Matsuno A."/>
            <person name="Muraki A."/>
            <person name="Nakazaki N."/>
            <person name="Naruo K."/>
            <person name="Okumura S."/>
            <person name="Shimpo S."/>
            <person name="Takeuchi C."/>
            <person name="Wada T."/>
            <person name="Watanabe A."/>
            <person name="Yamada M."/>
            <person name="Yasuda M."/>
            <person name="Tabata S."/>
        </authorList>
    </citation>
    <scope>NUCLEOTIDE SEQUENCE [LARGE SCALE GENOMIC DNA]</scope>
    <source>
        <strain>ATCC 27184 / PCC 6803 / Kazusa</strain>
    </source>
</reference>
<sequence length="331" mass="37124">MTISLEADLKSLQQSAQAAISGCDDLDGLDKLRVQYLGKKGELSLILKGMGKLSAEERPKFGAIANEVKEALQHDLESRKANLQNAAIEAQLAAETLDVTMAGSYRPQGRRHPLNSTVDRVLDIFVGLGYTVATGPQVETDYYNFEALNIPADHPARDMQDTFFLKDGRLLRTHTSPVQIRYMEKHDPPIRIVAPGRVYRRDTVDATHSAVFHQVELLAIDKGLAFTHLKGTIQAFIKQMFGEALPIRFRASYFPFTEPSAEVDVQWQGKWLEVMGCGMVDPNVMEAVGYDPEVYTGFAAGFGVERFAMVLHQIDDIRRLYNSDLRFLRQF</sequence>
<feature type="chain" id="PRO_0000126782" description="Phenylalanine--tRNA ligase alpha subunit">
    <location>
        <begin position="1"/>
        <end position="331"/>
    </location>
</feature>
<feature type="binding site" evidence="1">
    <location>
        <position position="258"/>
    </location>
    <ligand>
        <name>Mg(2+)</name>
        <dbReference type="ChEBI" id="CHEBI:18420"/>
        <note>shared with beta subunit</note>
    </ligand>
</feature>